<reference key="1">
    <citation type="journal article" date="2001" name="Nature">
        <title>Complete genome sequence of a multiple drug resistant Salmonella enterica serovar Typhi CT18.</title>
        <authorList>
            <person name="Parkhill J."/>
            <person name="Dougan G."/>
            <person name="James K.D."/>
            <person name="Thomson N.R."/>
            <person name="Pickard D."/>
            <person name="Wain J."/>
            <person name="Churcher C.M."/>
            <person name="Mungall K.L."/>
            <person name="Bentley S.D."/>
            <person name="Holden M.T.G."/>
            <person name="Sebaihia M."/>
            <person name="Baker S."/>
            <person name="Basham D."/>
            <person name="Brooks K."/>
            <person name="Chillingworth T."/>
            <person name="Connerton P."/>
            <person name="Cronin A."/>
            <person name="Davis P."/>
            <person name="Davies R.M."/>
            <person name="Dowd L."/>
            <person name="White N."/>
            <person name="Farrar J."/>
            <person name="Feltwell T."/>
            <person name="Hamlin N."/>
            <person name="Haque A."/>
            <person name="Hien T.T."/>
            <person name="Holroyd S."/>
            <person name="Jagels K."/>
            <person name="Krogh A."/>
            <person name="Larsen T.S."/>
            <person name="Leather S."/>
            <person name="Moule S."/>
            <person name="O'Gaora P."/>
            <person name="Parry C."/>
            <person name="Quail M.A."/>
            <person name="Rutherford K.M."/>
            <person name="Simmonds M."/>
            <person name="Skelton J."/>
            <person name="Stevens K."/>
            <person name="Whitehead S."/>
            <person name="Barrell B.G."/>
        </authorList>
    </citation>
    <scope>NUCLEOTIDE SEQUENCE [LARGE SCALE GENOMIC DNA]</scope>
    <source>
        <strain>CT18</strain>
    </source>
</reference>
<reference key="2">
    <citation type="journal article" date="2003" name="J. Bacteriol.">
        <title>Comparative genomics of Salmonella enterica serovar Typhi strains Ty2 and CT18.</title>
        <authorList>
            <person name="Deng W."/>
            <person name="Liou S.-R."/>
            <person name="Plunkett G. III"/>
            <person name="Mayhew G.F."/>
            <person name="Rose D.J."/>
            <person name="Burland V."/>
            <person name="Kodoyianni V."/>
            <person name="Schwartz D.C."/>
            <person name="Blattner F.R."/>
        </authorList>
    </citation>
    <scope>NUCLEOTIDE SEQUENCE [LARGE SCALE GENOMIC DNA]</scope>
    <source>
        <strain>ATCC 700931 / Ty2</strain>
    </source>
</reference>
<gene>
    <name evidence="1" type="primary">dctA</name>
    <name type="ordered locus">STY4189</name>
    <name type="ordered locus">t3903</name>
</gene>
<evidence type="ECO:0000255" key="1">
    <source>
        <dbReference type="HAMAP-Rule" id="MF_01300"/>
    </source>
</evidence>
<name>DCTA_SALTI</name>
<dbReference type="EMBL" id="AL513382">
    <property type="protein sequence ID" value="CAD08011.1"/>
    <property type="molecule type" value="Genomic_DNA"/>
</dbReference>
<dbReference type="EMBL" id="AE014613">
    <property type="protein sequence ID" value="AAO71377.1"/>
    <property type="molecule type" value="Genomic_DNA"/>
</dbReference>
<dbReference type="RefSeq" id="NP_458305.1">
    <property type="nucleotide sequence ID" value="NC_003198.1"/>
</dbReference>
<dbReference type="RefSeq" id="WP_000858232.1">
    <property type="nucleotide sequence ID" value="NZ_WSUR01000001.1"/>
</dbReference>
<dbReference type="SMR" id="Q8Z287"/>
<dbReference type="STRING" id="220341.gene:17588024"/>
<dbReference type="KEGG" id="stt:t3903"/>
<dbReference type="KEGG" id="sty:STY4189"/>
<dbReference type="PATRIC" id="fig|220341.7.peg.4278"/>
<dbReference type="eggNOG" id="COG1301">
    <property type="taxonomic scope" value="Bacteria"/>
</dbReference>
<dbReference type="HOGENOM" id="CLU_019375_7_0_6"/>
<dbReference type="OMA" id="TWTKEID"/>
<dbReference type="OrthoDB" id="9766690at2"/>
<dbReference type="Proteomes" id="UP000000541">
    <property type="component" value="Chromosome"/>
</dbReference>
<dbReference type="Proteomes" id="UP000002670">
    <property type="component" value="Chromosome"/>
</dbReference>
<dbReference type="GO" id="GO:0005886">
    <property type="term" value="C:plasma membrane"/>
    <property type="evidence" value="ECO:0007669"/>
    <property type="project" value="UniProtKB-SubCell"/>
</dbReference>
<dbReference type="GO" id="GO:0015138">
    <property type="term" value="F:fumarate transmembrane transporter activity"/>
    <property type="evidence" value="ECO:0007669"/>
    <property type="project" value="TreeGrafter"/>
</dbReference>
<dbReference type="GO" id="GO:0015366">
    <property type="term" value="F:malate:proton symporter activity"/>
    <property type="evidence" value="ECO:0007669"/>
    <property type="project" value="TreeGrafter"/>
</dbReference>
<dbReference type="GO" id="GO:0015141">
    <property type="term" value="F:succinate transmembrane transporter activity"/>
    <property type="evidence" value="ECO:0007669"/>
    <property type="project" value="TreeGrafter"/>
</dbReference>
<dbReference type="GO" id="GO:0070778">
    <property type="term" value="P:L-aspartate transmembrane transport"/>
    <property type="evidence" value="ECO:0007669"/>
    <property type="project" value="TreeGrafter"/>
</dbReference>
<dbReference type="FunFam" id="1.10.3860.10:FF:000001">
    <property type="entry name" value="C4-dicarboxylate transport protein"/>
    <property type="match status" value="1"/>
</dbReference>
<dbReference type="Gene3D" id="1.10.3860.10">
    <property type="entry name" value="Sodium:dicarboxylate symporter"/>
    <property type="match status" value="1"/>
</dbReference>
<dbReference type="HAMAP" id="MF_01300">
    <property type="entry name" value="C4_dicarb_transport"/>
    <property type="match status" value="1"/>
</dbReference>
<dbReference type="InterPro" id="IPR023954">
    <property type="entry name" value="C4_dicarb_transport"/>
</dbReference>
<dbReference type="InterPro" id="IPR001991">
    <property type="entry name" value="Na-dicarboxylate_symporter"/>
</dbReference>
<dbReference type="InterPro" id="IPR018107">
    <property type="entry name" value="Na-dicarboxylate_symporter_CS"/>
</dbReference>
<dbReference type="InterPro" id="IPR036458">
    <property type="entry name" value="Na:dicarbo_symporter_sf"/>
</dbReference>
<dbReference type="NCBIfam" id="NF002461">
    <property type="entry name" value="PRK01663.1"/>
    <property type="match status" value="1"/>
</dbReference>
<dbReference type="NCBIfam" id="NF009587">
    <property type="entry name" value="PRK13027.1"/>
    <property type="match status" value="1"/>
</dbReference>
<dbReference type="PANTHER" id="PTHR42865:SF1">
    <property type="entry name" value="AEROBIC C4-DICARBOXYLATE TRANSPORT PROTEIN"/>
    <property type="match status" value="1"/>
</dbReference>
<dbReference type="PANTHER" id="PTHR42865">
    <property type="entry name" value="PROTON/GLUTAMATE-ASPARTATE SYMPORTER"/>
    <property type="match status" value="1"/>
</dbReference>
<dbReference type="Pfam" id="PF00375">
    <property type="entry name" value="SDF"/>
    <property type="match status" value="1"/>
</dbReference>
<dbReference type="PRINTS" id="PR00173">
    <property type="entry name" value="EDTRNSPORT"/>
</dbReference>
<dbReference type="SUPFAM" id="SSF118215">
    <property type="entry name" value="Proton glutamate symport protein"/>
    <property type="match status" value="1"/>
</dbReference>
<dbReference type="PROSITE" id="PS00713">
    <property type="entry name" value="NA_DICARBOXYL_SYMP_1"/>
    <property type="match status" value="1"/>
</dbReference>
<dbReference type="PROSITE" id="PS00714">
    <property type="entry name" value="NA_DICARBOXYL_SYMP_2"/>
    <property type="match status" value="1"/>
</dbReference>
<organism>
    <name type="scientific">Salmonella typhi</name>
    <dbReference type="NCBI Taxonomy" id="90370"/>
    <lineage>
        <taxon>Bacteria</taxon>
        <taxon>Pseudomonadati</taxon>
        <taxon>Pseudomonadota</taxon>
        <taxon>Gammaproteobacteria</taxon>
        <taxon>Enterobacterales</taxon>
        <taxon>Enterobacteriaceae</taxon>
        <taxon>Salmonella</taxon>
    </lineage>
</organism>
<proteinExistence type="inferred from homology"/>
<feature type="chain" id="PRO_0000202111" description="Aerobic C4-dicarboxylate transport protein">
    <location>
        <begin position="1"/>
        <end position="428"/>
    </location>
</feature>
<feature type="transmembrane region" description="Helical" evidence="1">
    <location>
        <begin position="5"/>
        <end position="27"/>
    </location>
</feature>
<feature type="transmembrane region" description="Helical" evidence="1">
    <location>
        <begin position="47"/>
        <end position="64"/>
    </location>
</feature>
<feature type="transmembrane region" description="Helical" evidence="1">
    <location>
        <begin position="77"/>
        <end position="99"/>
    </location>
</feature>
<feature type="transmembrane region" description="Helical" evidence="1">
    <location>
        <begin position="141"/>
        <end position="163"/>
    </location>
</feature>
<feature type="transmembrane region" description="Helical" evidence="1">
    <location>
        <begin position="184"/>
        <end position="206"/>
    </location>
</feature>
<feature type="transmembrane region" description="Helical" evidence="1">
    <location>
        <begin position="216"/>
        <end position="238"/>
    </location>
</feature>
<feature type="transmembrane region" description="Helical" evidence="1">
    <location>
        <begin position="289"/>
        <end position="311"/>
    </location>
</feature>
<feature type="transmembrane region" description="Helical" evidence="1">
    <location>
        <begin position="326"/>
        <end position="348"/>
    </location>
</feature>
<feature type="transmembrane region" description="Helical" evidence="1">
    <location>
        <begin position="353"/>
        <end position="375"/>
    </location>
</feature>
<accession>Q8Z287</accession>
<protein>
    <recommendedName>
        <fullName>Aerobic C4-dicarboxylate transport protein</fullName>
    </recommendedName>
</protein>
<sequence>MKTSLFKSLYFQVLTAIAIGILLGHYYPELGAQMKPLGDAFVKLIKMIIAPVIFCTVVTGIAGMESMKAVGRTGAVALLYFEIVSTIALINGLIIVNVVQPGAGMNVDPATLDAQAVAVYAAQAKEQGIIAFLMDVIPGSVIGAFASGNILQVLLFAVLFGFALHRLGSKGQLIFNVIESFSQVIFGIINMIMRLAPIGAFGAMAFTIGKYGVGSLVQLGQLIICFYITCILFVVVVLGTIARVTGFSIFKFIRYIREELLIVLGTSSSESALPRMLDKMEKLGCRKSVVGLVIPTGYSFNLDGTSIYLTMAAVFIAQATNSHMDIFHQITLLVVLLLSSKGAAGVTGSGFIVLAATISAVGHLPVAGLALILGIDRFMSEARALTNLVGNGVATVVVAKWVKELDHQKLDDVLNNRAPDGKTHEISS</sequence>
<keyword id="KW-0997">Cell inner membrane</keyword>
<keyword id="KW-1003">Cell membrane</keyword>
<keyword id="KW-0472">Membrane</keyword>
<keyword id="KW-0769">Symport</keyword>
<keyword id="KW-0812">Transmembrane</keyword>
<keyword id="KW-1133">Transmembrane helix</keyword>
<keyword id="KW-0813">Transport</keyword>
<comment type="function">
    <text evidence="1">Responsible for the transport of dicarboxylates such as succinate, fumarate, and malate from the periplasm across the membrane.</text>
</comment>
<comment type="subcellular location">
    <subcellularLocation>
        <location evidence="1">Cell inner membrane</location>
        <topology evidence="1">Multi-pass membrane protein</topology>
    </subcellularLocation>
</comment>
<comment type="similarity">
    <text evidence="1">Belongs to the dicarboxylate/amino acid:cation symporter (DAACS) (TC 2.A.23) family.</text>
</comment>